<accession>B1XNV8</accession>
<keyword id="KW-1185">Reference proteome</keyword>
<keyword id="KW-0687">Ribonucleoprotein</keyword>
<keyword id="KW-0689">Ribosomal protein</keyword>
<keyword id="KW-0694">RNA-binding</keyword>
<keyword id="KW-0699">rRNA-binding</keyword>
<sequence>MAKKSMIERDKKRARMVAKYAAKRAALKEAFNNAADPLEKLEIHRKIQNLPRNSSPTRMRNRCQITGRPRSYYRDFGLCRNVLRDWAHQGLLPGVVKSSW</sequence>
<dbReference type="EMBL" id="CP000951">
    <property type="protein sequence ID" value="ACA98401.1"/>
    <property type="molecule type" value="Genomic_DNA"/>
</dbReference>
<dbReference type="RefSeq" id="WP_012306025.1">
    <property type="nucleotide sequence ID" value="NZ_JAHHPU010000001.1"/>
</dbReference>
<dbReference type="SMR" id="B1XNV8"/>
<dbReference type="STRING" id="32049.SYNPCC7002_A0391"/>
<dbReference type="KEGG" id="syp:SYNPCC7002_A0391"/>
<dbReference type="eggNOG" id="COG0199">
    <property type="taxonomic scope" value="Bacteria"/>
</dbReference>
<dbReference type="HOGENOM" id="CLU_139869_0_1_3"/>
<dbReference type="Proteomes" id="UP000001688">
    <property type="component" value="Chromosome"/>
</dbReference>
<dbReference type="GO" id="GO:0005737">
    <property type="term" value="C:cytoplasm"/>
    <property type="evidence" value="ECO:0007669"/>
    <property type="project" value="UniProtKB-ARBA"/>
</dbReference>
<dbReference type="GO" id="GO:0015935">
    <property type="term" value="C:small ribosomal subunit"/>
    <property type="evidence" value="ECO:0007669"/>
    <property type="project" value="TreeGrafter"/>
</dbReference>
<dbReference type="GO" id="GO:0019843">
    <property type="term" value="F:rRNA binding"/>
    <property type="evidence" value="ECO:0007669"/>
    <property type="project" value="UniProtKB-UniRule"/>
</dbReference>
<dbReference type="GO" id="GO:0003735">
    <property type="term" value="F:structural constituent of ribosome"/>
    <property type="evidence" value="ECO:0007669"/>
    <property type="project" value="InterPro"/>
</dbReference>
<dbReference type="GO" id="GO:0006412">
    <property type="term" value="P:translation"/>
    <property type="evidence" value="ECO:0007669"/>
    <property type="project" value="UniProtKB-UniRule"/>
</dbReference>
<dbReference type="FunFam" id="1.10.287.1480:FF:000001">
    <property type="entry name" value="30S ribosomal protein S14"/>
    <property type="match status" value="1"/>
</dbReference>
<dbReference type="Gene3D" id="1.10.287.1480">
    <property type="match status" value="1"/>
</dbReference>
<dbReference type="HAMAP" id="MF_00537">
    <property type="entry name" value="Ribosomal_uS14_1"/>
    <property type="match status" value="1"/>
</dbReference>
<dbReference type="InterPro" id="IPR001209">
    <property type="entry name" value="Ribosomal_uS14"/>
</dbReference>
<dbReference type="InterPro" id="IPR023036">
    <property type="entry name" value="Ribosomal_uS14_bac/plastid"/>
</dbReference>
<dbReference type="InterPro" id="IPR018271">
    <property type="entry name" value="Ribosomal_uS14_CS"/>
</dbReference>
<dbReference type="NCBIfam" id="NF006477">
    <property type="entry name" value="PRK08881.1"/>
    <property type="match status" value="1"/>
</dbReference>
<dbReference type="PANTHER" id="PTHR19836">
    <property type="entry name" value="30S RIBOSOMAL PROTEIN S14"/>
    <property type="match status" value="1"/>
</dbReference>
<dbReference type="PANTHER" id="PTHR19836:SF19">
    <property type="entry name" value="SMALL RIBOSOMAL SUBUNIT PROTEIN US14M"/>
    <property type="match status" value="1"/>
</dbReference>
<dbReference type="Pfam" id="PF00253">
    <property type="entry name" value="Ribosomal_S14"/>
    <property type="match status" value="1"/>
</dbReference>
<dbReference type="SUPFAM" id="SSF57716">
    <property type="entry name" value="Glucocorticoid receptor-like (DNA-binding domain)"/>
    <property type="match status" value="1"/>
</dbReference>
<dbReference type="PROSITE" id="PS00527">
    <property type="entry name" value="RIBOSOMAL_S14"/>
    <property type="match status" value="1"/>
</dbReference>
<reference key="1">
    <citation type="submission" date="2008-02" db="EMBL/GenBank/DDBJ databases">
        <title>Complete sequence of Synechococcus sp. PCC 7002.</title>
        <authorList>
            <person name="Li T."/>
            <person name="Zhao J."/>
            <person name="Zhao C."/>
            <person name="Liu Z."/>
            <person name="Zhao F."/>
            <person name="Marquardt J."/>
            <person name="Nomura C.T."/>
            <person name="Persson S."/>
            <person name="Detter J.C."/>
            <person name="Richardson P.M."/>
            <person name="Lanz C."/>
            <person name="Schuster S.C."/>
            <person name="Wang J."/>
            <person name="Li S."/>
            <person name="Huang X."/>
            <person name="Cai T."/>
            <person name="Yu Z."/>
            <person name="Luo J."/>
            <person name="Zhao J."/>
            <person name="Bryant D.A."/>
        </authorList>
    </citation>
    <scope>NUCLEOTIDE SEQUENCE [LARGE SCALE GENOMIC DNA]</scope>
    <source>
        <strain>ATCC 27264 / PCC 7002 / PR-6</strain>
    </source>
</reference>
<name>RS14_PICP2</name>
<comment type="function">
    <text evidence="1">Binds 16S rRNA, required for the assembly of 30S particles and may also be responsible for determining the conformation of the 16S rRNA at the A site.</text>
</comment>
<comment type="subunit">
    <text evidence="1">Part of the 30S ribosomal subunit. Contacts proteins S3 and S10.</text>
</comment>
<comment type="similarity">
    <text evidence="1">Belongs to the universal ribosomal protein uS14 family.</text>
</comment>
<gene>
    <name evidence="1" type="primary">rpsN</name>
    <name evidence="1" type="synonym">rps14</name>
    <name type="ordered locus">SYNPCC7002_A0391</name>
</gene>
<organism>
    <name type="scientific">Picosynechococcus sp. (strain ATCC 27264 / PCC 7002 / PR-6)</name>
    <name type="common">Agmenellum quadruplicatum</name>
    <dbReference type="NCBI Taxonomy" id="32049"/>
    <lineage>
        <taxon>Bacteria</taxon>
        <taxon>Bacillati</taxon>
        <taxon>Cyanobacteriota</taxon>
        <taxon>Cyanophyceae</taxon>
        <taxon>Oscillatoriophycideae</taxon>
        <taxon>Chroococcales</taxon>
        <taxon>Geminocystaceae</taxon>
        <taxon>Picosynechococcus</taxon>
    </lineage>
</organism>
<evidence type="ECO:0000255" key="1">
    <source>
        <dbReference type="HAMAP-Rule" id="MF_00537"/>
    </source>
</evidence>
<evidence type="ECO:0000305" key="2"/>
<protein>
    <recommendedName>
        <fullName evidence="1">Small ribosomal subunit protein uS14</fullName>
    </recommendedName>
    <alternativeName>
        <fullName evidence="2">30S ribosomal protein S14</fullName>
    </alternativeName>
</protein>
<proteinExistence type="inferred from homology"/>
<feature type="chain" id="PRO_1000128613" description="Small ribosomal subunit protein uS14">
    <location>
        <begin position="1"/>
        <end position="100"/>
    </location>
</feature>